<accession>A5DFM9</accession>
<comment type="function">
    <text evidence="1">Required for the post-translational delivery of tail-anchored (TA) proteins to the endoplasmic reticulum. Together with GET2, acts as a membrane receptor for soluble GET3, which recognizes and selectively binds the transmembrane domain of TA proteins in the cytosol. The GET complex cooperates with the HDEL receptor ERD2 to mediate the ATP-dependent retrieval of resident ER proteins that contain a C-terminal H-D-E-L retention signal from the Golgi to the ER.</text>
</comment>
<comment type="subunit">
    <text evidence="1">Component of the Golgi to ER traffic (GET) complex, which is composed of GET1, GET2 and GET3. Within the complex, GET1 and GET2 form a heterotetramer which is stabilized by phosphatidylinositol binding and which binds to the GET3 homodimer.</text>
</comment>
<comment type="subcellular location">
    <subcellularLocation>
        <location evidence="1">Endoplasmic reticulum membrane</location>
        <topology evidence="1">Multi-pass membrane protein</topology>
    </subcellularLocation>
    <subcellularLocation>
        <location evidence="1">Golgi apparatus membrane</location>
        <topology evidence="1">Multi-pass membrane protein</topology>
    </subcellularLocation>
</comment>
<comment type="similarity">
    <text evidence="1">Belongs to the WRB/GET1 family.</text>
</comment>
<comment type="sequence caution" evidence="2">
    <conflict type="erroneous initiation">
        <sequence resource="EMBL-CDS" id="EDK37982"/>
    </conflict>
</comment>
<name>GET1_PICGU</name>
<feature type="chain" id="PRO_0000388609" description="Golgi to ER traffic protein 1">
    <location>
        <begin position="1"/>
        <end position="200"/>
    </location>
</feature>
<feature type="topological domain" description="Lumenal" evidence="1">
    <location>
        <begin position="1"/>
        <end position="6"/>
    </location>
</feature>
<feature type="transmembrane region" description="Helical" evidence="1">
    <location>
        <begin position="7"/>
        <end position="26"/>
    </location>
</feature>
<feature type="topological domain" description="Cytoplasmic" evidence="1">
    <location>
        <begin position="27"/>
        <end position="113"/>
    </location>
</feature>
<feature type="transmembrane region" description="Helical" evidence="1">
    <location>
        <begin position="114"/>
        <end position="134"/>
    </location>
</feature>
<feature type="topological domain" description="Lumenal" evidence="1">
    <location>
        <begin position="135"/>
        <end position="158"/>
    </location>
</feature>
<feature type="transmembrane region" description="Helical" evidence="1">
    <location>
        <begin position="159"/>
        <end position="175"/>
    </location>
</feature>
<feature type="topological domain" description="Cytoplasmic" evidence="1">
    <location>
        <begin position="176"/>
        <end position="200"/>
    </location>
</feature>
<feature type="coiled-coil region" evidence="1">
    <location>
        <begin position="75"/>
        <end position="107"/>
    </location>
</feature>
<sequence length="200" mass="22660">MEPYTLLLFIFVIQIVKQIISAVGKQSIESISWVLYCRVAPKFGHSKLASMSQKSSQLRTVAGERRAVSAQDQYAKWTKLNRQHDKLVAEIEQLQKEVDLDKVKVNTFTGYLIAILTSIPIWFFRVWYRSVVLFYFPPGILPRALEWSIALPFTVTGGVSLTVWMMAAGAVASSLTFLFMFPFEKAVPKPVLAKKSPQQL</sequence>
<protein>
    <recommendedName>
        <fullName evidence="1">Golgi to ER traffic protein 1</fullName>
    </recommendedName>
    <alternativeName>
        <fullName evidence="1">Guided entry of tail-anchored proteins 1</fullName>
    </alternativeName>
</protein>
<dbReference type="EMBL" id="CH408156">
    <property type="protein sequence ID" value="EDK37982.2"/>
    <property type="status" value="ALT_INIT"/>
    <property type="molecule type" value="Genomic_DNA"/>
</dbReference>
<dbReference type="RefSeq" id="XP_001486409.1">
    <property type="nucleotide sequence ID" value="XM_001486359.1"/>
</dbReference>
<dbReference type="SMR" id="A5DFM9"/>
<dbReference type="STRING" id="294746.A5DFM9"/>
<dbReference type="GeneID" id="5127939"/>
<dbReference type="KEGG" id="pgu:PGUG_02080"/>
<dbReference type="eggNOG" id="KOG4253">
    <property type="taxonomic scope" value="Eukaryota"/>
</dbReference>
<dbReference type="HOGENOM" id="CLU_089418_2_0_1"/>
<dbReference type="InParanoid" id="A5DFM9"/>
<dbReference type="OrthoDB" id="69461at2759"/>
<dbReference type="Proteomes" id="UP000001997">
    <property type="component" value="Unassembled WGS sequence"/>
</dbReference>
<dbReference type="GO" id="GO:0005789">
    <property type="term" value="C:endoplasmic reticulum membrane"/>
    <property type="evidence" value="ECO:0007669"/>
    <property type="project" value="UniProtKB-SubCell"/>
</dbReference>
<dbReference type="GO" id="GO:0043529">
    <property type="term" value="C:GET complex"/>
    <property type="evidence" value="ECO:0007669"/>
    <property type="project" value="UniProtKB-UniRule"/>
</dbReference>
<dbReference type="GO" id="GO:0000139">
    <property type="term" value="C:Golgi membrane"/>
    <property type="evidence" value="ECO:0007669"/>
    <property type="project" value="UniProtKB-SubCell"/>
</dbReference>
<dbReference type="GO" id="GO:0043495">
    <property type="term" value="F:protein-membrane adaptor activity"/>
    <property type="evidence" value="ECO:0007669"/>
    <property type="project" value="TreeGrafter"/>
</dbReference>
<dbReference type="GO" id="GO:0071816">
    <property type="term" value="P:tail-anchored membrane protein insertion into ER membrane"/>
    <property type="evidence" value="ECO:0007669"/>
    <property type="project" value="InterPro"/>
</dbReference>
<dbReference type="GO" id="GO:0016192">
    <property type="term" value="P:vesicle-mediated transport"/>
    <property type="evidence" value="ECO:0007669"/>
    <property type="project" value="UniProtKB-KW"/>
</dbReference>
<dbReference type="Gene3D" id="1.10.287.660">
    <property type="entry name" value="Helix hairpin bin"/>
    <property type="match status" value="1"/>
</dbReference>
<dbReference type="HAMAP" id="MF_03113">
    <property type="entry name" value="Get1"/>
    <property type="match status" value="1"/>
</dbReference>
<dbReference type="InterPro" id="IPR028945">
    <property type="entry name" value="Get1"/>
</dbReference>
<dbReference type="InterPro" id="IPR027538">
    <property type="entry name" value="Get1_fungi"/>
</dbReference>
<dbReference type="InterPro" id="IPR029012">
    <property type="entry name" value="Helix_hairpin_bin_sf"/>
</dbReference>
<dbReference type="PANTHER" id="PTHR42650:SF1">
    <property type="entry name" value="GUIDED ENTRY OF TAIL-ANCHORED PROTEINS FACTOR 1"/>
    <property type="match status" value="1"/>
</dbReference>
<dbReference type="PANTHER" id="PTHR42650">
    <property type="entry name" value="TAIL-ANCHORED PROTEIN INSERTION RECEPTOR WRB"/>
    <property type="match status" value="1"/>
</dbReference>
<dbReference type="Pfam" id="PF04420">
    <property type="entry name" value="CHD5"/>
    <property type="match status" value="1"/>
</dbReference>
<proteinExistence type="inferred from homology"/>
<keyword id="KW-0175">Coiled coil</keyword>
<keyword id="KW-0256">Endoplasmic reticulum</keyword>
<keyword id="KW-0931">ER-Golgi transport</keyword>
<keyword id="KW-0333">Golgi apparatus</keyword>
<keyword id="KW-0472">Membrane</keyword>
<keyword id="KW-1185">Reference proteome</keyword>
<keyword id="KW-0812">Transmembrane</keyword>
<keyword id="KW-1133">Transmembrane helix</keyword>
<keyword id="KW-0813">Transport</keyword>
<organism>
    <name type="scientific">Meyerozyma guilliermondii (strain ATCC 6260 / CBS 566 / DSM 6381 / JCM 1539 / NBRC 10279 / NRRL Y-324)</name>
    <name type="common">Yeast</name>
    <name type="synonym">Candida guilliermondii</name>
    <dbReference type="NCBI Taxonomy" id="294746"/>
    <lineage>
        <taxon>Eukaryota</taxon>
        <taxon>Fungi</taxon>
        <taxon>Dikarya</taxon>
        <taxon>Ascomycota</taxon>
        <taxon>Saccharomycotina</taxon>
        <taxon>Pichiomycetes</taxon>
        <taxon>Debaryomycetaceae</taxon>
        <taxon>Meyerozyma</taxon>
    </lineage>
</organism>
<evidence type="ECO:0000255" key="1">
    <source>
        <dbReference type="HAMAP-Rule" id="MF_03113"/>
    </source>
</evidence>
<evidence type="ECO:0000305" key="2"/>
<gene>
    <name evidence="1" type="primary">GET1</name>
    <name type="ORF">PGUG_02080</name>
</gene>
<reference key="1">
    <citation type="journal article" date="2009" name="Nature">
        <title>Evolution of pathogenicity and sexual reproduction in eight Candida genomes.</title>
        <authorList>
            <person name="Butler G."/>
            <person name="Rasmussen M.D."/>
            <person name="Lin M.F."/>
            <person name="Santos M.A.S."/>
            <person name="Sakthikumar S."/>
            <person name="Munro C.A."/>
            <person name="Rheinbay E."/>
            <person name="Grabherr M."/>
            <person name="Forche A."/>
            <person name="Reedy J.L."/>
            <person name="Agrafioti I."/>
            <person name="Arnaud M.B."/>
            <person name="Bates S."/>
            <person name="Brown A.J.P."/>
            <person name="Brunke S."/>
            <person name="Costanzo M.C."/>
            <person name="Fitzpatrick D.A."/>
            <person name="de Groot P.W.J."/>
            <person name="Harris D."/>
            <person name="Hoyer L.L."/>
            <person name="Hube B."/>
            <person name="Klis F.M."/>
            <person name="Kodira C."/>
            <person name="Lennard N."/>
            <person name="Logue M.E."/>
            <person name="Martin R."/>
            <person name="Neiman A.M."/>
            <person name="Nikolaou E."/>
            <person name="Quail M.A."/>
            <person name="Quinn J."/>
            <person name="Santos M.C."/>
            <person name="Schmitzberger F.F."/>
            <person name="Sherlock G."/>
            <person name="Shah P."/>
            <person name="Silverstein K.A.T."/>
            <person name="Skrzypek M.S."/>
            <person name="Soll D."/>
            <person name="Staggs R."/>
            <person name="Stansfield I."/>
            <person name="Stumpf M.P.H."/>
            <person name="Sudbery P.E."/>
            <person name="Srikantha T."/>
            <person name="Zeng Q."/>
            <person name="Berman J."/>
            <person name="Berriman M."/>
            <person name="Heitman J."/>
            <person name="Gow N.A.R."/>
            <person name="Lorenz M.C."/>
            <person name="Birren B.W."/>
            <person name="Kellis M."/>
            <person name="Cuomo C.A."/>
        </authorList>
    </citation>
    <scope>NUCLEOTIDE SEQUENCE [LARGE SCALE GENOMIC DNA]</scope>
    <source>
        <strain>ATCC 6260 / CBS 566 / DSM 6381 / JCM 1539 / NBRC 10279 / NRRL Y-324</strain>
    </source>
</reference>